<sequence length="271" mass="31038">MKKKLKTFSLILLTGSLLVACGRGEVSSHSATLWEQIVYAFAKSIQWLSFNHSIGLGIILFTLIIRAIMMPLYNMQMKSSQKMQEIQPRLKELQKKYPGKDPDNRLKLNDEMQSMYKAEGVNPYASVLPLLIQLPVLWALFQALTRVSFLKVGTFLSLELSQPDPYYILPVLAALFTFLSTWLTNKAAVEKNIALTLMTYVMPFIILVTSFNFASGVVLYWTVSNAFQVFQILLLNNPYKIIKVREEAVRVAHEKEQRVKRAKRKASKKRK</sequence>
<proteinExistence type="inferred from homology"/>
<organism>
    <name type="scientific">Streptococcus agalactiae serotype V (strain ATCC BAA-611 / 2603 V/R)</name>
    <dbReference type="NCBI Taxonomy" id="208435"/>
    <lineage>
        <taxon>Bacteria</taxon>
        <taxon>Bacillati</taxon>
        <taxon>Bacillota</taxon>
        <taxon>Bacilli</taxon>
        <taxon>Lactobacillales</taxon>
        <taxon>Streptococcaceae</taxon>
        <taxon>Streptococcus</taxon>
    </lineage>
</organism>
<comment type="function">
    <text evidence="1">Required for the insertion and/or proper folding and/or complex formation of integral membrane proteins into the membrane. Involved in integration of membrane proteins that insert both dependently and independently of the Sec translocase complex, as well as at least some lipoproteins.</text>
</comment>
<comment type="subcellular location">
    <subcellularLocation>
        <location evidence="1">Cell membrane</location>
        <topology evidence="1">Multi-pass membrane protein</topology>
    </subcellularLocation>
</comment>
<comment type="similarity">
    <text evidence="1">Belongs to the OXA1/ALB3/YidC family. Type 2 subfamily.</text>
</comment>
<feature type="signal peptide" evidence="1">
    <location>
        <begin position="1"/>
        <end position="20"/>
    </location>
</feature>
<feature type="chain" id="PRO_0000020402" description="Membrane protein insertase YidC 1">
    <location>
        <begin position="21"/>
        <end position="271"/>
    </location>
</feature>
<feature type="transmembrane region" description="Helical" evidence="1">
    <location>
        <begin position="45"/>
        <end position="65"/>
    </location>
</feature>
<feature type="transmembrane region" description="Helical" evidence="1">
    <location>
        <begin position="124"/>
        <end position="144"/>
    </location>
</feature>
<feature type="transmembrane region" description="Helical" evidence="1">
    <location>
        <begin position="163"/>
        <end position="183"/>
    </location>
</feature>
<feature type="transmembrane region" description="Helical" evidence="1">
    <location>
        <begin position="201"/>
        <end position="221"/>
    </location>
</feature>
<feature type="lipid moiety-binding region" description="N-palmitoyl cysteine" evidence="1">
    <location>
        <position position="21"/>
    </location>
</feature>
<feature type="lipid moiety-binding region" description="S-diacylglycerol cysteine" evidence="1">
    <location>
        <position position="21"/>
    </location>
</feature>
<name>YIDC1_STRA5</name>
<reference key="1">
    <citation type="journal article" date="2002" name="Proc. Natl. Acad. Sci. U.S.A.">
        <title>Complete genome sequence and comparative genomic analysis of an emerging human pathogen, serotype V Streptococcus agalactiae.</title>
        <authorList>
            <person name="Tettelin H."/>
            <person name="Masignani V."/>
            <person name="Cieslewicz M.J."/>
            <person name="Eisen J.A."/>
            <person name="Peterson S.N."/>
            <person name="Wessels M.R."/>
            <person name="Paulsen I.T."/>
            <person name="Nelson K.E."/>
            <person name="Margarit I."/>
            <person name="Read T.D."/>
            <person name="Madoff L.C."/>
            <person name="Wolf A.M."/>
            <person name="Beanan M.J."/>
            <person name="Brinkac L.M."/>
            <person name="Daugherty S.C."/>
            <person name="DeBoy R.T."/>
            <person name="Durkin A.S."/>
            <person name="Kolonay J.F."/>
            <person name="Madupu R."/>
            <person name="Lewis M.R."/>
            <person name="Radune D."/>
            <person name="Fedorova N.B."/>
            <person name="Scanlan D."/>
            <person name="Khouri H.M."/>
            <person name="Mulligan S."/>
            <person name="Carty H.A."/>
            <person name="Cline R.T."/>
            <person name="Van Aken S.E."/>
            <person name="Gill J."/>
            <person name="Scarselli M."/>
            <person name="Mora M."/>
            <person name="Iacobini E.T."/>
            <person name="Brettoni C."/>
            <person name="Galli G."/>
            <person name="Mariani M."/>
            <person name="Vegni F."/>
            <person name="Maione D."/>
            <person name="Rinaudo D."/>
            <person name="Rappuoli R."/>
            <person name="Telford J.L."/>
            <person name="Kasper D.L."/>
            <person name="Grandi G."/>
            <person name="Fraser C.M."/>
        </authorList>
    </citation>
    <scope>NUCLEOTIDE SEQUENCE [LARGE SCALE GENOMIC DNA]</scope>
    <source>
        <strain>ATCC BAA-611 / 2603 V/R</strain>
    </source>
</reference>
<accession>Q8CX16</accession>
<evidence type="ECO:0000255" key="1">
    <source>
        <dbReference type="HAMAP-Rule" id="MF_01811"/>
    </source>
</evidence>
<gene>
    <name evidence="1" type="primary">yidC1</name>
    <name type="ordered locus">SAG0409</name>
</gene>
<protein>
    <recommendedName>
        <fullName evidence="1">Membrane protein insertase YidC 1</fullName>
    </recommendedName>
    <alternativeName>
        <fullName evidence="1">Foldase YidC 1</fullName>
    </alternativeName>
    <alternativeName>
        <fullName evidence="1">Membrane integrase YidC 1</fullName>
    </alternativeName>
    <alternativeName>
        <fullName evidence="1">Membrane protein YidC 1</fullName>
    </alternativeName>
</protein>
<dbReference type="EMBL" id="AE009948">
    <property type="protein sequence ID" value="AAM99315.1"/>
    <property type="molecule type" value="Genomic_DNA"/>
</dbReference>
<dbReference type="RefSeq" id="NP_687443.1">
    <property type="nucleotide sequence ID" value="NC_004116.1"/>
</dbReference>
<dbReference type="RefSeq" id="WP_000727918.1">
    <property type="nucleotide sequence ID" value="NC_004116.1"/>
</dbReference>
<dbReference type="SMR" id="Q8CX16"/>
<dbReference type="STRING" id="208435.SAG0409"/>
<dbReference type="DNASU" id="1013204"/>
<dbReference type="KEGG" id="sag:SAG0409"/>
<dbReference type="PATRIC" id="fig|208435.3.peg.404"/>
<dbReference type="HOGENOM" id="CLU_036138_5_0_9"/>
<dbReference type="OrthoDB" id="9780552at2"/>
<dbReference type="Proteomes" id="UP000000821">
    <property type="component" value="Chromosome"/>
</dbReference>
<dbReference type="GO" id="GO:0005886">
    <property type="term" value="C:plasma membrane"/>
    <property type="evidence" value="ECO:0007669"/>
    <property type="project" value="UniProtKB-SubCell"/>
</dbReference>
<dbReference type="GO" id="GO:0032977">
    <property type="term" value="F:membrane insertase activity"/>
    <property type="evidence" value="ECO:0007669"/>
    <property type="project" value="InterPro"/>
</dbReference>
<dbReference type="GO" id="GO:0051205">
    <property type="term" value="P:protein insertion into membrane"/>
    <property type="evidence" value="ECO:0007669"/>
    <property type="project" value="TreeGrafter"/>
</dbReference>
<dbReference type="GO" id="GO:0015031">
    <property type="term" value="P:protein transport"/>
    <property type="evidence" value="ECO:0007669"/>
    <property type="project" value="UniProtKB-KW"/>
</dbReference>
<dbReference type="CDD" id="cd20070">
    <property type="entry name" value="5TM_YidC_Alb3"/>
    <property type="match status" value="1"/>
</dbReference>
<dbReference type="HAMAP" id="MF_01811">
    <property type="entry name" value="YidC_type2"/>
    <property type="match status" value="1"/>
</dbReference>
<dbReference type="InterPro" id="IPR001708">
    <property type="entry name" value="YidC/ALB3/OXA1/COX18"/>
</dbReference>
<dbReference type="InterPro" id="IPR028055">
    <property type="entry name" value="YidC/Oxa/ALB_C"/>
</dbReference>
<dbReference type="InterPro" id="IPR023060">
    <property type="entry name" value="YidC/YidC1/YidC2_Firmicutes"/>
</dbReference>
<dbReference type="InterPro" id="IPR047196">
    <property type="entry name" value="YidC_ALB_C"/>
</dbReference>
<dbReference type="NCBIfam" id="TIGR03592">
    <property type="entry name" value="yidC_oxa1_cterm"/>
    <property type="match status" value="1"/>
</dbReference>
<dbReference type="PANTHER" id="PTHR12428:SF65">
    <property type="entry name" value="CYTOCHROME C OXIDASE ASSEMBLY PROTEIN COX18, MITOCHONDRIAL"/>
    <property type="match status" value="1"/>
</dbReference>
<dbReference type="PANTHER" id="PTHR12428">
    <property type="entry name" value="OXA1"/>
    <property type="match status" value="1"/>
</dbReference>
<dbReference type="Pfam" id="PF02096">
    <property type="entry name" value="60KD_IMP"/>
    <property type="match status" value="1"/>
</dbReference>
<dbReference type="PRINTS" id="PR00701">
    <property type="entry name" value="60KDINNERMP"/>
</dbReference>
<dbReference type="PROSITE" id="PS51257">
    <property type="entry name" value="PROKAR_LIPOPROTEIN"/>
    <property type="match status" value="1"/>
</dbReference>
<keyword id="KW-1003">Cell membrane</keyword>
<keyword id="KW-0143">Chaperone</keyword>
<keyword id="KW-0449">Lipoprotein</keyword>
<keyword id="KW-0472">Membrane</keyword>
<keyword id="KW-0564">Palmitate</keyword>
<keyword id="KW-0653">Protein transport</keyword>
<keyword id="KW-1185">Reference proteome</keyword>
<keyword id="KW-0732">Signal</keyword>
<keyword id="KW-0812">Transmembrane</keyword>
<keyword id="KW-1133">Transmembrane helix</keyword>
<keyword id="KW-0813">Transport</keyword>